<protein>
    <recommendedName>
        <fullName>Spindle pole body component 98</fullName>
    </recommendedName>
    <alternativeName>
        <fullName>DdSpc98</fullName>
        <shortName>Spc98</shortName>
    </alternativeName>
</protein>
<dbReference type="EMBL" id="AAFI02000058">
    <property type="protein sequence ID" value="EAL65442.1"/>
    <property type="molecule type" value="Genomic_DNA"/>
</dbReference>
<dbReference type="EMBL" id="AJ318507">
    <property type="protein sequence ID" value="CAC47948.1"/>
    <property type="molecule type" value="mRNA"/>
</dbReference>
<dbReference type="RefSeq" id="XP_638829.1">
    <property type="nucleotide sequence ID" value="XM_633737.1"/>
</dbReference>
<dbReference type="SMR" id="Q95ZG4"/>
<dbReference type="FunCoup" id="Q95ZG4">
    <property type="interactions" value="739"/>
</dbReference>
<dbReference type="IntAct" id="Q95ZG4">
    <property type="interactions" value="2"/>
</dbReference>
<dbReference type="STRING" id="44689.Q95ZG4"/>
<dbReference type="PaxDb" id="44689-DDB0191482"/>
<dbReference type="EnsemblProtists" id="EAL65442">
    <property type="protein sequence ID" value="EAL65442"/>
    <property type="gene ID" value="DDB_G0283909"/>
</dbReference>
<dbReference type="GeneID" id="8624353"/>
<dbReference type="KEGG" id="ddi:DDB_G0283909"/>
<dbReference type="dictyBase" id="DDB_G0283909">
    <property type="gene designation" value="spc98"/>
</dbReference>
<dbReference type="VEuPathDB" id="AmoebaDB:DDB_G0283909"/>
<dbReference type="eggNOG" id="KOG2000">
    <property type="taxonomic scope" value="Eukaryota"/>
</dbReference>
<dbReference type="HOGENOM" id="CLU_003736_2_0_1"/>
<dbReference type="InParanoid" id="Q95ZG4"/>
<dbReference type="OMA" id="FVNNLWS"/>
<dbReference type="PhylomeDB" id="Q95ZG4"/>
<dbReference type="PRO" id="PR:Q95ZG4"/>
<dbReference type="Proteomes" id="UP000002195">
    <property type="component" value="Chromosome 4"/>
</dbReference>
<dbReference type="GO" id="GO:0005813">
    <property type="term" value="C:centrosome"/>
    <property type="evidence" value="ECO:0000314"/>
    <property type="project" value="dictyBase"/>
</dbReference>
<dbReference type="GO" id="GO:0005737">
    <property type="term" value="C:cytoplasm"/>
    <property type="evidence" value="ECO:0007669"/>
    <property type="project" value="UniProtKB-SubCell"/>
</dbReference>
<dbReference type="GO" id="GO:0000930">
    <property type="term" value="C:gamma-tubulin complex"/>
    <property type="evidence" value="ECO:0000318"/>
    <property type="project" value="GO_Central"/>
</dbReference>
<dbReference type="GO" id="GO:0005874">
    <property type="term" value="C:microtubule"/>
    <property type="evidence" value="ECO:0007669"/>
    <property type="project" value="UniProtKB-KW"/>
</dbReference>
<dbReference type="GO" id="GO:0000922">
    <property type="term" value="C:spindle pole"/>
    <property type="evidence" value="ECO:0007669"/>
    <property type="project" value="InterPro"/>
</dbReference>
<dbReference type="GO" id="GO:0043015">
    <property type="term" value="F:gamma-tubulin binding"/>
    <property type="evidence" value="ECO:0000314"/>
    <property type="project" value="dictyBase"/>
</dbReference>
<dbReference type="GO" id="GO:0031122">
    <property type="term" value="P:cytoplasmic microtubule organization"/>
    <property type="evidence" value="ECO:0000318"/>
    <property type="project" value="GO_Central"/>
</dbReference>
<dbReference type="GO" id="GO:0051321">
    <property type="term" value="P:meiotic cell cycle"/>
    <property type="evidence" value="ECO:0000318"/>
    <property type="project" value="GO_Central"/>
</dbReference>
<dbReference type="GO" id="GO:0007020">
    <property type="term" value="P:microtubule nucleation"/>
    <property type="evidence" value="ECO:0000318"/>
    <property type="project" value="GO_Central"/>
</dbReference>
<dbReference type="GO" id="GO:0000278">
    <property type="term" value="P:mitotic cell cycle"/>
    <property type="evidence" value="ECO:0000318"/>
    <property type="project" value="GO_Central"/>
</dbReference>
<dbReference type="GO" id="GO:0051225">
    <property type="term" value="P:spindle assembly"/>
    <property type="evidence" value="ECO:0000318"/>
    <property type="project" value="GO_Central"/>
</dbReference>
<dbReference type="FunFam" id="1.20.120.1900:FF:000003">
    <property type="entry name" value="Gamma-tubulin complex component"/>
    <property type="match status" value="1"/>
</dbReference>
<dbReference type="Gene3D" id="1.20.120.1900">
    <property type="entry name" value="Gamma-tubulin complex, C-terminal domain"/>
    <property type="match status" value="1"/>
</dbReference>
<dbReference type="InterPro" id="IPR007259">
    <property type="entry name" value="GCP"/>
</dbReference>
<dbReference type="InterPro" id="IPR040457">
    <property type="entry name" value="GCP_C"/>
</dbReference>
<dbReference type="InterPro" id="IPR042241">
    <property type="entry name" value="GCP_C_sf"/>
</dbReference>
<dbReference type="InterPro" id="IPR041470">
    <property type="entry name" value="GCP_N"/>
</dbReference>
<dbReference type="PANTHER" id="PTHR19302">
    <property type="entry name" value="GAMMA TUBULIN COMPLEX PROTEIN"/>
    <property type="match status" value="1"/>
</dbReference>
<dbReference type="PANTHER" id="PTHR19302:SF14">
    <property type="entry name" value="GAMMA-TUBULIN COMPLEX COMPONENT 3"/>
    <property type="match status" value="1"/>
</dbReference>
<dbReference type="Pfam" id="PF04130">
    <property type="entry name" value="GCP_C_terminal"/>
    <property type="match status" value="1"/>
</dbReference>
<dbReference type="Pfam" id="PF17681">
    <property type="entry name" value="GCP_N_terminal"/>
    <property type="match status" value="1"/>
</dbReference>
<sequence length="813" mass="94434">MNSTFVQIPKLNINKQVKKKTDSITANTLLPKLMNDTSIQQPNQQQQQQQPQQPQQVTNGITILQNYQPQQPQPATTTTQQLNSANNTPTLVSTKKSVIGINEIPEHLLIRDIIYVFQGIDGTYIKYNKQSDSFKIDENTSNTLVNGEPAYISKPKRDLVYRLCEFGWLFKKVRLFITNNDFKKTGLTNQSFCSAINDELIELYRIIAILETQVYKKFDMVNYGGGGGGSGGSGSGSGLESPSSVSSGGTTTSTEIPFIDGDSLTLIRLFVWIQSPLKRLKVLGTCVDSITVDMKGGEILSKIDTLSKHGDQDIRILIHNIMFKICQPLFSMIRLWMFKGEINDPYQEFFIRQYESVQLEKTWKEKFAIVARLLPSFISLPLSKRILIIGKSINYMKQFCNNFKEDKNDRYYYYNQEDDDDDDEDHDDNDDDDENENQGEDDEIIERKLLIKESKIIKEKTKELNYINKEVLQEIIELVSRQSSERLLKIVLNRFKFMNHVKALKKYLLLGQGDFIQYLMDLIGEDLLKPTSQIQRHKLVGWMDTAIRNSNAQFEEQDIVNRLDIALLPERPGNIGWDIFSLDYHVDTPLNTILSPNDILRYKKIFHFMWGIKRVEYSLASIWRKIRSSTSLSILSPIGGDIHKSHLIMNEMVHFISNFQYYLMFEVLECSWKNLEKFIDQEATDLDQLIEAHHQYLQDICNKMFLSNSDSCYECFKKLLSIIIKFTLLQTKLINLSIAIQNEKNFNETHQAQVNKEFNSFRNHLNNLYQEYTTSFYKFQSEILKVKVNQDLNPISLQYMLDFNEYYEEKKDN</sequence>
<gene>
    <name type="primary">spc98</name>
    <name type="ORF">DDB_G0283909</name>
</gene>
<reference key="1">
    <citation type="journal article" date="2005" name="Nature">
        <title>The genome of the social amoeba Dictyostelium discoideum.</title>
        <authorList>
            <person name="Eichinger L."/>
            <person name="Pachebat J.A."/>
            <person name="Gloeckner G."/>
            <person name="Rajandream M.A."/>
            <person name="Sucgang R."/>
            <person name="Berriman M."/>
            <person name="Song J."/>
            <person name="Olsen R."/>
            <person name="Szafranski K."/>
            <person name="Xu Q."/>
            <person name="Tunggal B."/>
            <person name="Kummerfeld S."/>
            <person name="Madera M."/>
            <person name="Konfortov B.A."/>
            <person name="Rivero F."/>
            <person name="Bankier A.T."/>
            <person name="Lehmann R."/>
            <person name="Hamlin N."/>
            <person name="Davies R."/>
            <person name="Gaudet P."/>
            <person name="Fey P."/>
            <person name="Pilcher K."/>
            <person name="Chen G."/>
            <person name="Saunders D."/>
            <person name="Sodergren E.J."/>
            <person name="Davis P."/>
            <person name="Kerhornou A."/>
            <person name="Nie X."/>
            <person name="Hall N."/>
            <person name="Anjard C."/>
            <person name="Hemphill L."/>
            <person name="Bason N."/>
            <person name="Farbrother P."/>
            <person name="Desany B."/>
            <person name="Just E."/>
            <person name="Morio T."/>
            <person name="Rost R."/>
            <person name="Churcher C.M."/>
            <person name="Cooper J."/>
            <person name="Haydock S."/>
            <person name="van Driessche N."/>
            <person name="Cronin A."/>
            <person name="Goodhead I."/>
            <person name="Muzny D.M."/>
            <person name="Mourier T."/>
            <person name="Pain A."/>
            <person name="Lu M."/>
            <person name="Harper D."/>
            <person name="Lindsay R."/>
            <person name="Hauser H."/>
            <person name="James K.D."/>
            <person name="Quiles M."/>
            <person name="Madan Babu M."/>
            <person name="Saito T."/>
            <person name="Buchrieser C."/>
            <person name="Wardroper A."/>
            <person name="Felder M."/>
            <person name="Thangavelu M."/>
            <person name="Johnson D."/>
            <person name="Knights A."/>
            <person name="Loulseged H."/>
            <person name="Mungall K.L."/>
            <person name="Oliver K."/>
            <person name="Price C."/>
            <person name="Quail M.A."/>
            <person name="Urushihara H."/>
            <person name="Hernandez J."/>
            <person name="Rabbinowitsch E."/>
            <person name="Steffen D."/>
            <person name="Sanders M."/>
            <person name="Ma J."/>
            <person name="Kohara Y."/>
            <person name="Sharp S."/>
            <person name="Simmonds M.N."/>
            <person name="Spiegler S."/>
            <person name="Tivey A."/>
            <person name="Sugano S."/>
            <person name="White B."/>
            <person name="Walker D."/>
            <person name="Woodward J.R."/>
            <person name="Winckler T."/>
            <person name="Tanaka Y."/>
            <person name="Shaulsky G."/>
            <person name="Schleicher M."/>
            <person name="Weinstock G.M."/>
            <person name="Rosenthal A."/>
            <person name="Cox E.C."/>
            <person name="Chisholm R.L."/>
            <person name="Gibbs R.A."/>
            <person name="Loomis W.F."/>
            <person name="Platzer M."/>
            <person name="Kay R.R."/>
            <person name="Williams J.G."/>
            <person name="Dear P.H."/>
            <person name="Noegel A.A."/>
            <person name="Barrell B.G."/>
            <person name="Kuspa A."/>
        </authorList>
    </citation>
    <scope>NUCLEOTIDE SEQUENCE [LARGE SCALE GENOMIC DNA]</scope>
    <source>
        <strain>AX4</strain>
    </source>
</reference>
<reference key="2">
    <citation type="journal article" date="2002" name="Eur. J. Cell Biol.">
        <title>Molecular analysis of the cytosolic Dictyostelium gamma-tubulin complex.</title>
        <authorList>
            <person name="Daunderer C."/>
            <person name="Graf R.O."/>
        </authorList>
    </citation>
    <scope>NUCLEOTIDE SEQUENCE [MRNA] OF 2-813</scope>
    <source>
        <strain>AX2</strain>
    </source>
</reference>
<reference key="3">
    <citation type="journal article" date="2006" name="J. Proteome Res.">
        <title>Identification of novel centrosomal proteins in Dictyostelium discoideum by comparative proteomic approaches.</title>
        <authorList>
            <person name="Reinders Y."/>
            <person name="Schulz I."/>
            <person name="Graef R."/>
            <person name="Sickmann A."/>
        </authorList>
    </citation>
    <scope>IDENTIFICATION BY MASS SPECTROMETRY [LARGE SCALE ANALYSIS]</scope>
</reference>
<evidence type="ECO:0000256" key="1">
    <source>
        <dbReference type="SAM" id="MobiDB-lite"/>
    </source>
</evidence>
<evidence type="ECO:0000305" key="2"/>
<name>SPC98_DICDI</name>
<keyword id="KW-0963">Cytoplasm</keyword>
<keyword id="KW-0206">Cytoskeleton</keyword>
<keyword id="KW-0493">Microtubule</keyword>
<keyword id="KW-1185">Reference proteome</keyword>
<proteinExistence type="evidence at protein level"/>
<comment type="function">
    <text>May be involved in microtubule nucleation.</text>
</comment>
<comment type="subunit">
    <text>Gamma-tubulin small complex (Gamma TuSC) consists of gamma-tubulin and SPC98.</text>
</comment>
<comment type="subcellular location">
    <subcellularLocation>
        <location>Cytoplasm</location>
        <location>Cytoskeleton</location>
        <location>Microtubule organizing center</location>
        <location>Centrosome</location>
    </subcellularLocation>
    <subcellularLocation>
        <location>Cytoplasm</location>
    </subcellularLocation>
</comment>
<comment type="similarity">
    <text evidence="2">Belongs to the TUBGCP family.</text>
</comment>
<organism>
    <name type="scientific">Dictyostelium discoideum</name>
    <name type="common">Social amoeba</name>
    <dbReference type="NCBI Taxonomy" id="44689"/>
    <lineage>
        <taxon>Eukaryota</taxon>
        <taxon>Amoebozoa</taxon>
        <taxon>Evosea</taxon>
        <taxon>Eumycetozoa</taxon>
        <taxon>Dictyostelia</taxon>
        <taxon>Dictyosteliales</taxon>
        <taxon>Dictyosteliaceae</taxon>
        <taxon>Dictyostelium</taxon>
    </lineage>
</organism>
<accession>Q95ZG4</accession>
<accession>Q54QB5</accession>
<feature type="chain" id="PRO_0000078122" description="Spindle pole body component 98">
    <location>
        <begin position="1"/>
        <end position="813"/>
    </location>
</feature>
<feature type="region of interest" description="Disordered" evidence="1">
    <location>
        <begin position="69"/>
        <end position="88"/>
    </location>
</feature>
<feature type="region of interest" description="Disordered" evidence="1">
    <location>
        <begin position="231"/>
        <end position="252"/>
    </location>
</feature>
<feature type="region of interest" description="Disordered" evidence="1">
    <location>
        <begin position="414"/>
        <end position="439"/>
    </location>
</feature>
<feature type="compositionally biased region" description="Low complexity" evidence="1">
    <location>
        <begin position="69"/>
        <end position="81"/>
    </location>
</feature>
<feature type="compositionally biased region" description="Low complexity" evidence="1">
    <location>
        <begin position="238"/>
        <end position="252"/>
    </location>
</feature>
<feature type="compositionally biased region" description="Acidic residues" evidence="1">
    <location>
        <begin position="416"/>
        <end position="439"/>
    </location>
</feature>